<dbReference type="EMBL" id="CP000301">
    <property type="protein sequence ID" value="ABD90329.1"/>
    <property type="molecule type" value="Genomic_DNA"/>
</dbReference>
<dbReference type="SMR" id="Q20X07"/>
<dbReference type="STRING" id="316056.RPC_4807"/>
<dbReference type="KEGG" id="rpc:RPC_4807"/>
<dbReference type="eggNOG" id="COG0217">
    <property type="taxonomic scope" value="Bacteria"/>
</dbReference>
<dbReference type="HOGENOM" id="CLU_062974_2_2_5"/>
<dbReference type="OrthoDB" id="9781053at2"/>
<dbReference type="GO" id="GO:0005829">
    <property type="term" value="C:cytosol"/>
    <property type="evidence" value="ECO:0007669"/>
    <property type="project" value="TreeGrafter"/>
</dbReference>
<dbReference type="GO" id="GO:0003677">
    <property type="term" value="F:DNA binding"/>
    <property type="evidence" value="ECO:0007669"/>
    <property type="project" value="UniProtKB-UniRule"/>
</dbReference>
<dbReference type="GO" id="GO:0006355">
    <property type="term" value="P:regulation of DNA-templated transcription"/>
    <property type="evidence" value="ECO:0007669"/>
    <property type="project" value="UniProtKB-UniRule"/>
</dbReference>
<dbReference type="FunFam" id="1.10.10.200:FF:000002">
    <property type="entry name" value="Probable transcriptional regulatory protein CLM62_37755"/>
    <property type="match status" value="1"/>
</dbReference>
<dbReference type="Gene3D" id="1.10.10.200">
    <property type="match status" value="1"/>
</dbReference>
<dbReference type="Gene3D" id="3.30.70.980">
    <property type="match status" value="2"/>
</dbReference>
<dbReference type="HAMAP" id="MF_00693">
    <property type="entry name" value="Transcrip_reg_TACO1"/>
    <property type="match status" value="1"/>
</dbReference>
<dbReference type="InterPro" id="IPR017856">
    <property type="entry name" value="Integrase-like_N"/>
</dbReference>
<dbReference type="InterPro" id="IPR048300">
    <property type="entry name" value="TACO1_YebC-like_2nd/3rd_dom"/>
</dbReference>
<dbReference type="InterPro" id="IPR049083">
    <property type="entry name" value="TACO1_YebC_N"/>
</dbReference>
<dbReference type="InterPro" id="IPR002876">
    <property type="entry name" value="Transcrip_reg_TACO1-like"/>
</dbReference>
<dbReference type="InterPro" id="IPR026564">
    <property type="entry name" value="Transcrip_reg_TACO1-like_dom3"/>
</dbReference>
<dbReference type="InterPro" id="IPR029072">
    <property type="entry name" value="YebC-like"/>
</dbReference>
<dbReference type="NCBIfam" id="NF001030">
    <property type="entry name" value="PRK00110.1"/>
    <property type="match status" value="1"/>
</dbReference>
<dbReference type="NCBIfam" id="NF009044">
    <property type="entry name" value="PRK12378.1"/>
    <property type="match status" value="1"/>
</dbReference>
<dbReference type="NCBIfam" id="TIGR01033">
    <property type="entry name" value="YebC/PmpR family DNA-binding transcriptional regulator"/>
    <property type="match status" value="1"/>
</dbReference>
<dbReference type="PANTHER" id="PTHR12532:SF6">
    <property type="entry name" value="TRANSCRIPTIONAL REGULATORY PROTEIN YEBC-RELATED"/>
    <property type="match status" value="1"/>
</dbReference>
<dbReference type="PANTHER" id="PTHR12532">
    <property type="entry name" value="TRANSLATIONAL ACTIVATOR OF CYTOCHROME C OXIDASE 1"/>
    <property type="match status" value="1"/>
</dbReference>
<dbReference type="Pfam" id="PF20772">
    <property type="entry name" value="TACO1_YebC_N"/>
    <property type="match status" value="1"/>
</dbReference>
<dbReference type="Pfam" id="PF01709">
    <property type="entry name" value="Transcrip_reg"/>
    <property type="match status" value="1"/>
</dbReference>
<dbReference type="SUPFAM" id="SSF75625">
    <property type="entry name" value="YebC-like"/>
    <property type="match status" value="1"/>
</dbReference>
<name>Y4807_RHOPB</name>
<organism>
    <name type="scientific">Rhodopseudomonas palustris (strain BisB18)</name>
    <dbReference type="NCBI Taxonomy" id="316056"/>
    <lineage>
        <taxon>Bacteria</taxon>
        <taxon>Pseudomonadati</taxon>
        <taxon>Pseudomonadota</taxon>
        <taxon>Alphaproteobacteria</taxon>
        <taxon>Hyphomicrobiales</taxon>
        <taxon>Nitrobacteraceae</taxon>
        <taxon>Rhodopseudomonas</taxon>
    </lineage>
</organism>
<protein>
    <recommendedName>
        <fullName evidence="1">Probable transcriptional regulatory protein RPC_4807</fullName>
    </recommendedName>
</protein>
<gene>
    <name type="ordered locus">RPC_4807</name>
</gene>
<feature type="chain" id="PRO_0000257117" description="Probable transcriptional regulatory protein RPC_4807">
    <location>
        <begin position="1"/>
        <end position="248"/>
    </location>
</feature>
<feature type="region of interest" description="Disordered" evidence="2">
    <location>
        <begin position="1"/>
        <end position="21"/>
    </location>
</feature>
<evidence type="ECO:0000255" key="1">
    <source>
        <dbReference type="HAMAP-Rule" id="MF_00693"/>
    </source>
</evidence>
<evidence type="ECO:0000256" key="2">
    <source>
        <dbReference type="SAM" id="MobiDB-lite"/>
    </source>
</evidence>
<proteinExistence type="inferred from homology"/>
<keyword id="KW-0963">Cytoplasm</keyword>
<keyword id="KW-0238">DNA-binding</keyword>
<keyword id="KW-0804">Transcription</keyword>
<keyword id="KW-0805">Transcription regulation</keyword>
<comment type="subcellular location">
    <subcellularLocation>
        <location evidence="1">Cytoplasm</location>
    </subcellularLocation>
</comment>
<comment type="similarity">
    <text evidence="1">Belongs to the TACO1 family.</text>
</comment>
<sequence length="248" mass="27019">MAGHSQFKNIMHRKGRQDAQKSKLFSKLAREITVAAKLGTPDPAMNARLRSAIIAARQENMPKDNIERAIKKAIGSDGENYDEIRYEGYGPGGVAVIVEALTDNRNRAASDIRSYFTKSGGNLGETGSVAFMFDRTGIIEFDAKVASADDMLDAAIEAGADDVLSSDSGHEVYASQDSFREVAKALEQKFGEARKAALTWKPQNTVPVDDETGEKLLKLIDLLQEHDDVQNVYANFEVSDALMAKMGG</sequence>
<reference key="1">
    <citation type="submission" date="2006-03" db="EMBL/GenBank/DDBJ databases">
        <title>Complete sequence of Rhodopseudomonas palustris BisB18.</title>
        <authorList>
            <consortium name="US DOE Joint Genome Institute"/>
            <person name="Copeland A."/>
            <person name="Lucas S."/>
            <person name="Lapidus A."/>
            <person name="Barry K."/>
            <person name="Detter J.C."/>
            <person name="Glavina del Rio T."/>
            <person name="Hammon N."/>
            <person name="Israni S."/>
            <person name="Dalin E."/>
            <person name="Tice H."/>
            <person name="Pitluck S."/>
            <person name="Chain P."/>
            <person name="Malfatti S."/>
            <person name="Shin M."/>
            <person name="Vergez L."/>
            <person name="Schmutz J."/>
            <person name="Larimer F."/>
            <person name="Land M."/>
            <person name="Hauser L."/>
            <person name="Pelletier D.A."/>
            <person name="Kyrpides N."/>
            <person name="Anderson I."/>
            <person name="Oda Y."/>
            <person name="Harwood C.S."/>
            <person name="Richardson P."/>
        </authorList>
    </citation>
    <scope>NUCLEOTIDE SEQUENCE [LARGE SCALE GENOMIC DNA]</scope>
    <source>
        <strain>BisB18</strain>
    </source>
</reference>
<accession>Q20X07</accession>